<gene>
    <name evidence="1" type="primary">atpH</name>
    <name type="ordered locus">BSU36840</name>
</gene>
<sequence length="181" mass="19982">MSGSAVSKRYASALFDIANESAQLNQVEEELIVVKQVFQNEKALNDVLNHPKVPAAKKKELIQNAFGSLSQSVLNTIFLLIDRHRAAIVPELTDEFIKLANVARQTEDAIVYSVKPLTDAEMLPLSQVFAKKAGVASLRIRNEVQTDLIGGIKVRIGNRIYDGSVSGKLQRIERQLAGENR</sequence>
<name>ATPD_BACSU</name>
<accession>P37811</accession>
<keyword id="KW-0066">ATP synthesis</keyword>
<keyword id="KW-1003">Cell membrane</keyword>
<keyword id="KW-0139">CF(1)</keyword>
<keyword id="KW-0375">Hydrogen ion transport</keyword>
<keyword id="KW-0406">Ion transport</keyword>
<keyword id="KW-0472">Membrane</keyword>
<keyword id="KW-1185">Reference proteome</keyword>
<keyword id="KW-0813">Transport</keyword>
<proteinExistence type="evidence at protein level"/>
<organism>
    <name type="scientific">Bacillus subtilis (strain 168)</name>
    <dbReference type="NCBI Taxonomy" id="224308"/>
    <lineage>
        <taxon>Bacteria</taxon>
        <taxon>Bacillati</taxon>
        <taxon>Bacillota</taxon>
        <taxon>Bacilli</taxon>
        <taxon>Bacillales</taxon>
        <taxon>Bacillaceae</taxon>
        <taxon>Bacillus</taxon>
    </lineage>
</organism>
<protein>
    <recommendedName>
        <fullName evidence="1">ATP synthase subunit delta</fullName>
    </recommendedName>
    <alternativeName>
        <fullName evidence="1">ATP synthase F(1) sector subunit delta</fullName>
    </alternativeName>
    <alternativeName>
        <fullName evidence="1">F-type ATPase subunit delta</fullName>
        <shortName evidence="1">F-ATPase subunit delta</shortName>
    </alternativeName>
</protein>
<evidence type="ECO:0000255" key="1">
    <source>
        <dbReference type="HAMAP-Rule" id="MF_01416"/>
    </source>
</evidence>
<evidence type="ECO:0000269" key="2">
    <source>
    </source>
</evidence>
<evidence type="ECO:0000269" key="3">
    <source>
    </source>
</evidence>
<evidence type="ECO:0000305" key="4"/>
<dbReference type="EMBL" id="Z28592">
    <property type="protein sequence ID" value="CAA82257.1"/>
    <property type="molecule type" value="Genomic_DNA"/>
</dbReference>
<dbReference type="EMBL" id="AL009126">
    <property type="protein sequence ID" value="CAB15701.1"/>
    <property type="molecule type" value="Genomic_DNA"/>
</dbReference>
<dbReference type="PIR" id="I40365">
    <property type="entry name" value="I40365"/>
</dbReference>
<dbReference type="RefSeq" id="NP_391565.1">
    <property type="nucleotide sequence ID" value="NC_000964.3"/>
</dbReference>
<dbReference type="RefSeq" id="WP_003243176.1">
    <property type="nucleotide sequence ID" value="NZ_OZ025638.1"/>
</dbReference>
<dbReference type="SMR" id="P37811"/>
<dbReference type="FunCoup" id="P37811">
    <property type="interactions" value="686"/>
</dbReference>
<dbReference type="IntAct" id="P37811">
    <property type="interactions" value="2"/>
</dbReference>
<dbReference type="STRING" id="224308.BSU36840"/>
<dbReference type="jPOST" id="P37811"/>
<dbReference type="PaxDb" id="224308-BSU36840"/>
<dbReference type="EnsemblBacteria" id="CAB15701">
    <property type="protein sequence ID" value="CAB15701"/>
    <property type="gene ID" value="BSU_36840"/>
</dbReference>
<dbReference type="GeneID" id="936997"/>
<dbReference type="KEGG" id="bsu:BSU36840"/>
<dbReference type="PATRIC" id="fig|224308.179.peg.3990"/>
<dbReference type="eggNOG" id="COG0712">
    <property type="taxonomic scope" value="Bacteria"/>
</dbReference>
<dbReference type="InParanoid" id="P37811"/>
<dbReference type="OrthoDB" id="9802471at2"/>
<dbReference type="PhylomeDB" id="P37811"/>
<dbReference type="BioCyc" id="BSUB:BSU36840-MONOMER"/>
<dbReference type="SABIO-RK" id="P37811"/>
<dbReference type="Proteomes" id="UP000001570">
    <property type="component" value="Chromosome"/>
</dbReference>
<dbReference type="GO" id="GO:0045121">
    <property type="term" value="C:membrane raft"/>
    <property type="evidence" value="ECO:0007669"/>
    <property type="project" value="UniProtKB-SubCell"/>
</dbReference>
<dbReference type="GO" id="GO:0005886">
    <property type="term" value="C:plasma membrane"/>
    <property type="evidence" value="ECO:0007669"/>
    <property type="project" value="UniProtKB-SubCell"/>
</dbReference>
<dbReference type="GO" id="GO:0045259">
    <property type="term" value="C:proton-transporting ATP synthase complex"/>
    <property type="evidence" value="ECO:0007669"/>
    <property type="project" value="UniProtKB-KW"/>
</dbReference>
<dbReference type="GO" id="GO:0046933">
    <property type="term" value="F:proton-transporting ATP synthase activity, rotational mechanism"/>
    <property type="evidence" value="ECO:0007669"/>
    <property type="project" value="UniProtKB-UniRule"/>
</dbReference>
<dbReference type="GO" id="GO:0015986">
    <property type="term" value="P:proton motive force-driven ATP synthesis"/>
    <property type="evidence" value="ECO:0000318"/>
    <property type="project" value="GO_Central"/>
</dbReference>
<dbReference type="Gene3D" id="1.10.520.20">
    <property type="entry name" value="N-terminal domain of the delta subunit of the F1F0-ATP synthase"/>
    <property type="match status" value="1"/>
</dbReference>
<dbReference type="HAMAP" id="MF_01416">
    <property type="entry name" value="ATP_synth_delta_bact"/>
    <property type="match status" value="1"/>
</dbReference>
<dbReference type="InterPro" id="IPR026015">
    <property type="entry name" value="ATP_synth_OSCP/delta_N_sf"/>
</dbReference>
<dbReference type="InterPro" id="IPR020781">
    <property type="entry name" value="ATPase_OSCP/d_CS"/>
</dbReference>
<dbReference type="InterPro" id="IPR000711">
    <property type="entry name" value="ATPase_OSCP/dsu"/>
</dbReference>
<dbReference type="NCBIfam" id="TIGR01145">
    <property type="entry name" value="ATP_synt_delta"/>
    <property type="match status" value="1"/>
</dbReference>
<dbReference type="NCBIfam" id="NF004403">
    <property type="entry name" value="PRK05758.2-4"/>
    <property type="match status" value="1"/>
</dbReference>
<dbReference type="PANTHER" id="PTHR11910">
    <property type="entry name" value="ATP SYNTHASE DELTA CHAIN"/>
    <property type="match status" value="1"/>
</dbReference>
<dbReference type="Pfam" id="PF00213">
    <property type="entry name" value="OSCP"/>
    <property type="match status" value="1"/>
</dbReference>
<dbReference type="PRINTS" id="PR00125">
    <property type="entry name" value="ATPASEDELTA"/>
</dbReference>
<dbReference type="SUPFAM" id="SSF47928">
    <property type="entry name" value="N-terminal domain of the delta subunit of the F1F0-ATP synthase"/>
    <property type="match status" value="1"/>
</dbReference>
<dbReference type="PROSITE" id="PS00389">
    <property type="entry name" value="ATPASE_DELTA"/>
    <property type="match status" value="1"/>
</dbReference>
<comment type="function">
    <text evidence="1">F(1)F(0) ATP synthase produces ATP from ADP in the presence of a proton or sodium gradient. F-type ATPases consist of two structural domains, F(1) containing the extramembraneous catalytic core and F(0) containing the membrane proton channel, linked together by a central stalk and a peripheral stalk. During catalysis, ATP synthesis in the catalytic domain of F(1) is coupled via a rotary mechanism of the central stalk subunits to proton translocation.</text>
</comment>
<comment type="function">
    <text evidence="1">This protein is part of the stalk that links CF(0) to CF(1). It either transmits conformational changes from CF(0) to CF(1) or is implicated in proton conduction.</text>
</comment>
<comment type="subunit">
    <text evidence="1 2 3 4">F-type ATPases have 2 components, F(1) - the catalytic core - and F(0) - the membrane proton channel. F(1) has five subunits: alpha(3), beta(3), gamma(1), delta(1), epsilon(1). F(0) has three main subunits: a(1), b(2) and c(10-14). The alpha and beta chains form an alternating ring which encloses part of the gamma chain. F(1) is attached to F(0) by a central stalk formed by the gamma and epsilon chains, while a peripheral stalk is formed by the delta and b chains (Probable). The F(1)F(0) complex interacts with SpoIIIJ and YqjG; YqgA is found in the same complex (By similarity) (PubMed:19717609) (Probable). Interacts with FloT (PubMed:23651456).</text>
</comment>
<comment type="subcellular location">
    <subcellularLocation>
        <location evidence="1 3">Cell membrane</location>
        <topology evidence="1">Peripheral membrane protein</topology>
    </subcellularLocation>
    <subcellularLocation>
        <location evidence="3">Membrane raft</location>
        <topology>Peripheral membrane protein</topology>
    </subcellularLocation>
    <text evidence="3">Present in detergent-resistant membrane (DRM) fractions that may be equivalent to eukaryotic membrane rafts; these rafts include proteins involved in signaling, molecule trafficking and protein secretion.</text>
</comment>
<comment type="similarity">
    <text evidence="1">Belongs to the ATPase delta chain family.</text>
</comment>
<feature type="chain" id="PRO_0000193458" description="ATP synthase subunit delta">
    <location>
        <begin position="1"/>
        <end position="181"/>
    </location>
</feature>
<reference key="1">
    <citation type="journal article" date="1994" name="J. Bacteriol.">
        <title>Bacillus subtilis F0F1 ATPase: DNA sequence of the atp operon and characterization of atp mutants.</title>
        <authorList>
            <person name="Santana M."/>
            <person name="Ionescu M.S."/>
            <person name="Vertes A."/>
            <person name="Longin R."/>
            <person name="Kunst F."/>
            <person name="Danchin A."/>
            <person name="Glaser P."/>
        </authorList>
    </citation>
    <scope>NUCLEOTIDE SEQUENCE [GENOMIC DNA]</scope>
    <source>
        <strain>168</strain>
    </source>
</reference>
<reference key="2">
    <citation type="journal article" date="1997" name="Nature">
        <title>The complete genome sequence of the Gram-positive bacterium Bacillus subtilis.</title>
        <authorList>
            <person name="Kunst F."/>
            <person name="Ogasawara N."/>
            <person name="Moszer I."/>
            <person name="Albertini A.M."/>
            <person name="Alloni G."/>
            <person name="Azevedo V."/>
            <person name="Bertero M.G."/>
            <person name="Bessieres P."/>
            <person name="Bolotin A."/>
            <person name="Borchert S."/>
            <person name="Borriss R."/>
            <person name="Boursier L."/>
            <person name="Brans A."/>
            <person name="Braun M."/>
            <person name="Brignell S.C."/>
            <person name="Bron S."/>
            <person name="Brouillet S."/>
            <person name="Bruschi C.V."/>
            <person name="Caldwell B."/>
            <person name="Capuano V."/>
            <person name="Carter N.M."/>
            <person name="Choi S.-K."/>
            <person name="Codani J.-J."/>
            <person name="Connerton I.F."/>
            <person name="Cummings N.J."/>
            <person name="Daniel R.A."/>
            <person name="Denizot F."/>
            <person name="Devine K.M."/>
            <person name="Duesterhoeft A."/>
            <person name="Ehrlich S.D."/>
            <person name="Emmerson P.T."/>
            <person name="Entian K.-D."/>
            <person name="Errington J."/>
            <person name="Fabret C."/>
            <person name="Ferrari E."/>
            <person name="Foulger D."/>
            <person name="Fritz C."/>
            <person name="Fujita M."/>
            <person name="Fujita Y."/>
            <person name="Fuma S."/>
            <person name="Galizzi A."/>
            <person name="Galleron N."/>
            <person name="Ghim S.-Y."/>
            <person name="Glaser P."/>
            <person name="Goffeau A."/>
            <person name="Golightly E.J."/>
            <person name="Grandi G."/>
            <person name="Guiseppi G."/>
            <person name="Guy B.J."/>
            <person name="Haga K."/>
            <person name="Haiech J."/>
            <person name="Harwood C.R."/>
            <person name="Henaut A."/>
            <person name="Hilbert H."/>
            <person name="Holsappel S."/>
            <person name="Hosono S."/>
            <person name="Hullo M.-F."/>
            <person name="Itaya M."/>
            <person name="Jones L.-M."/>
            <person name="Joris B."/>
            <person name="Karamata D."/>
            <person name="Kasahara Y."/>
            <person name="Klaerr-Blanchard M."/>
            <person name="Klein C."/>
            <person name="Kobayashi Y."/>
            <person name="Koetter P."/>
            <person name="Koningstein G."/>
            <person name="Krogh S."/>
            <person name="Kumano M."/>
            <person name="Kurita K."/>
            <person name="Lapidus A."/>
            <person name="Lardinois S."/>
            <person name="Lauber J."/>
            <person name="Lazarevic V."/>
            <person name="Lee S.-M."/>
            <person name="Levine A."/>
            <person name="Liu H."/>
            <person name="Masuda S."/>
            <person name="Mauel C."/>
            <person name="Medigue C."/>
            <person name="Medina N."/>
            <person name="Mellado R.P."/>
            <person name="Mizuno M."/>
            <person name="Moestl D."/>
            <person name="Nakai S."/>
            <person name="Noback M."/>
            <person name="Noone D."/>
            <person name="O'Reilly M."/>
            <person name="Ogawa K."/>
            <person name="Ogiwara A."/>
            <person name="Oudega B."/>
            <person name="Park S.-H."/>
            <person name="Parro V."/>
            <person name="Pohl T.M."/>
            <person name="Portetelle D."/>
            <person name="Porwollik S."/>
            <person name="Prescott A.M."/>
            <person name="Presecan E."/>
            <person name="Pujic P."/>
            <person name="Purnelle B."/>
            <person name="Rapoport G."/>
            <person name="Rey M."/>
            <person name="Reynolds S."/>
            <person name="Rieger M."/>
            <person name="Rivolta C."/>
            <person name="Rocha E."/>
            <person name="Roche B."/>
            <person name="Rose M."/>
            <person name="Sadaie Y."/>
            <person name="Sato T."/>
            <person name="Scanlan E."/>
            <person name="Schleich S."/>
            <person name="Schroeter R."/>
            <person name="Scoffone F."/>
            <person name="Sekiguchi J."/>
            <person name="Sekowska A."/>
            <person name="Seror S.J."/>
            <person name="Serror P."/>
            <person name="Shin B.-S."/>
            <person name="Soldo B."/>
            <person name="Sorokin A."/>
            <person name="Tacconi E."/>
            <person name="Takagi T."/>
            <person name="Takahashi H."/>
            <person name="Takemaru K."/>
            <person name="Takeuchi M."/>
            <person name="Tamakoshi A."/>
            <person name="Tanaka T."/>
            <person name="Terpstra P."/>
            <person name="Tognoni A."/>
            <person name="Tosato V."/>
            <person name="Uchiyama S."/>
            <person name="Vandenbol M."/>
            <person name="Vannier F."/>
            <person name="Vassarotti A."/>
            <person name="Viari A."/>
            <person name="Wambutt R."/>
            <person name="Wedler E."/>
            <person name="Wedler H."/>
            <person name="Weitzenegger T."/>
            <person name="Winters P."/>
            <person name="Wipat A."/>
            <person name="Yamamoto H."/>
            <person name="Yamane K."/>
            <person name="Yasumoto K."/>
            <person name="Yata K."/>
            <person name="Yoshida K."/>
            <person name="Yoshikawa H.-F."/>
            <person name="Zumstein E."/>
            <person name="Yoshikawa H."/>
            <person name="Danchin A."/>
        </authorList>
    </citation>
    <scope>NUCLEOTIDE SEQUENCE [LARGE SCALE GENOMIC DNA]</scope>
    <source>
        <strain>168</strain>
    </source>
</reference>
<reference key="3">
    <citation type="journal article" date="2009" name="J. Bacteriol.">
        <title>Bacillus subtilis SpoIIIJ and YqjG function in membrane protein biogenesis.</title>
        <authorList>
            <person name="Saller M.J."/>
            <person name="Fusetti F."/>
            <person name="Driessen A.J."/>
        </authorList>
    </citation>
    <scope>IDENTIFICATION BY MASS SPECTROMETRY</scope>
    <scope>INTERACTION WITH SPOIIIJ AND YQJG</scope>
    <source>
        <strain>168</strain>
    </source>
</reference>
<reference key="4">
    <citation type="journal article" date="2013" name="Mol. Microbiol.">
        <title>Flotillins functionally organize the bacterial membrane.</title>
        <authorList>
            <person name="Bach J.N."/>
            <person name="Bramkamp M."/>
        </authorList>
    </citation>
    <scope>INTERACTION WITH FLOT</scope>
    <scope>SUBCELLULAR LOCATION</scope>
    <source>
        <strain>168</strain>
    </source>
</reference>